<proteinExistence type="evidence at transcript level"/>
<accession>Q2KIS3</accession>
<dbReference type="EMBL" id="BC112529">
    <property type="protein sequence ID" value="AAI12530.1"/>
    <property type="molecule type" value="mRNA"/>
</dbReference>
<dbReference type="BMRB" id="Q2KIS3"/>
<dbReference type="SMR" id="Q2KIS3"/>
<dbReference type="FunCoup" id="Q2KIS3">
    <property type="interactions" value="1259"/>
</dbReference>
<dbReference type="STRING" id="9913.ENSBTAP00000000010"/>
<dbReference type="PaxDb" id="9913-ENSBTAP00000000010"/>
<dbReference type="eggNOG" id="KOG0010">
    <property type="taxonomic scope" value="Eukaryota"/>
</dbReference>
<dbReference type="InParanoid" id="Q2KIS3"/>
<dbReference type="OrthoDB" id="10016665at2759"/>
<dbReference type="Proteomes" id="UP000009136">
    <property type="component" value="Unplaced"/>
</dbReference>
<dbReference type="GO" id="GO:0005829">
    <property type="term" value="C:cytosol"/>
    <property type="evidence" value="ECO:0000318"/>
    <property type="project" value="GO_Central"/>
</dbReference>
<dbReference type="GO" id="GO:0031593">
    <property type="term" value="F:polyubiquitin modification-dependent protein binding"/>
    <property type="evidence" value="ECO:0000318"/>
    <property type="project" value="GO_Central"/>
</dbReference>
<dbReference type="GO" id="GO:0045087">
    <property type="term" value="P:innate immune response"/>
    <property type="evidence" value="ECO:0007669"/>
    <property type="project" value="UniProtKB-KW"/>
</dbReference>
<dbReference type="GO" id="GO:0006511">
    <property type="term" value="P:ubiquitin-dependent protein catabolic process"/>
    <property type="evidence" value="ECO:0000318"/>
    <property type="project" value="GO_Central"/>
</dbReference>
<dbReference type="CDD" id="cd14326">
    <property type="entry name" value="UBA_UBL7"/>
    <property type="match status" value="1"/>
</dbReference>
<dbReference type="CDD" id="cd01815">
    <property type="entry name" value="Ubl_UBL7"/>
    <property type="match status" value="1"/>
</dbReference>
<dbReference type="FunFam" id="1.10.8.10:FF:000192">
    <property type="entry name" value="Ubiquitin-like 7b (bone marrow stromal cell-derived)"/>
    <property type="match status" value="1"/>
</dbReference>
<dbReference type="FunFam" id="3.10.20.90:FF:000139">
    <property type="entry name" value="ubiquitin-like protein 7"/>
    <property type="match status" value="1"/>
</dbReference>
<dbReference type="Gene3D" id="1.10.8.10">
    <property type="entry name" value="DNA helicase RuvA subunit, C-terminal domain"/>
    <property type="match status" value="1"/>
</dbReference>
<dbReference type="Gene3D" id="3.10.20.90">
    <property type="entry name" value="Phosphatidylinositol 3-kinase Catalytic Subunit, Chain A, domain 1"/>
    <property type="match status" value="1"/>
</dbReference>
<dbReference type="InterPro" id="IPR015940">
    <property type="entry name" value="UBA"/>
</dbReference>
<dbReference type="InterPro" id="IPR009060">
    <property type="entry name" value="UBA-like_sf"/>
</dbReference>
<dbReference type="InterPro" id="IPR015496">
    <property type="entry name" value="Ubiquilin"/>
</dbReference>
<dbReference type="InterPro" id="IPR000626">
    <property type="entry name" value="Ubiquitin-like_dom"/>
</dbReference>
<dbReference type="InterPro" id="IPR029071">
    <property type="entry name" value="Ubiquitin-like_domsf"/>
</dbReference>
<dbReference type="InterPro" id="IPR047878">
    <property type="entry name" value="UBL7_UBA"/>
</dbReference>
<dbReference type="InterPro" id="IPR047877">
    <property type="entry name" value="UBL7_Ubl"/>
</dbReference>
<dbReference type="PANTHER" id="PTHR10677">
    <property type="entry name" value="UBIQUILIN"/>
    <property type="match status" value="1"/>
</dbReference>
<dbReference type="PANTHER" id="PTHR10677:SF25">
    <property type="entry name" value="UBIQUITIN-LIKE PROTEIN 7"/>
    <property type="match status" value="1"/>
</dbReference>
<dbReference type="Pfam" id="PF00240">
    <property type="entry name" value="ubiquitin"/>
    <property type="match status" value="1"/>
</dbReference>
<dbReference type="SMART" id="SM00165">
    <property type="entry name" value="UBA"/>
    <property type="match status" value="1"/>
</dbReference>
<dbReference type="SMART" id="SM00213">
    <property type="entry name" value="UBQ"/>
    <property type="match status" value="1"/>
</dbReference>
<dbReference type="SUPFAM" id="SSF46934">
    <property type="entry name" value="UBA-like"/>
    <property type="match status" value="1"/>
</dbReference>
<dbReference type="SUPFAM" id="SSF54236">
    <property type="entry name" value="Ubiquitin-like"/>
    <property type="match status" value="1"/>
</dbReference>
<dbReference type="PROSITE" id="PS50030">
    <property type="entry name" value="UBA"/>
    <property type="match status" value="1"/>
</dbReference>
<dbReference type="PROSITE" id="PS50053">
    <property type="entry name" value="UBIQUITIN_2"/>
    <property type="match status" value="1"/>
</dbReference>
<gene>
    <name type="primary">UBL7</name>
</gene>
<reference key="1">
    <citation type="submission" date="2006-01" db="EMBL/GenBank/DDBJ databases">
        <authorList>
            <consortium name="NIH - Mammalian Gene Collection (MGC) project"/>
        </authorList>
    </citation>
    <scope>NUCLEOTIDE SEQUENCE [LARGE SCALE MRNA]</scope>
    <source>
        <strain>Hereford</strain>
        <tissue>Testis</tissue>
    </source>
</reference>
<feature type="chain" id="PRO_0000285574" description="Ubiquitin-like protein 7">
    <location>
        <begin position="1"/>
        <end position="380"/>
    </location>
</feature>
<feature type="domain" description="Ubiquitin-like" evidence="3">
    <location>
        <begin position="18"/>
        <end position="98"/>
    </location>
</feature>
<feature type="domain" description="UBA" evidence="2">
    <location>
        <begin position="333"/>
        <end position="377"/>
    </location>
</feature>
<feature type="region of interest" description="Disordered" evidence="4">
    <location>
        <begin position="201"/>
        <end position="313"/>
    </location>
</feature>
<feature type="compositionally biased region" description="Low complexity" evidence="4">
    <location>
        <begin position="239"/>
        <end position="255"/>
    </location>
</feature>
<feature type="compositionally biased region" description="Low complexity" evidence="4">
    <location>
        <begin position="270"/>
        <end position="312"/>
    </location>
</feature>
<feature type="modified residue" description="Phosphoserine" evidence="1">
    <location>
        <position position="230"/>
    </location>
</feature>
<protein>
    <recommendedName>
        <fullName>Ubiquitin-like protein 7</fullName>
    </recommendedName>
</protein>
<sequence length="380" mass="40380">MSLSDWHLAVKLADQPLAPKSILRLPETELGEYSLGGYSISFLKQLIAGKLQESVPDPELIDLIYCGRKLKDDQTLDFYGIQPGSTVHVLRKSWPEPDQKPEPVDKVAALREFRVLHTALHSSSSYREAVFKMLSNKESLDQIIVATPGLSSDPIALGVLQDKDLFSVFADPNMLDTLVPAHPALVNAIVLVLHSVAGSTPMPGADSSSRGMPSSAYRDMPGGFLFEGLSDDEDDFHPSARSTPSSSTPSSRPASLGYSGAAGPRPITQSELATALALASTPESSSHTPTPGTQGQSSGTSPMSSSVQSGTPITNDLFSQALQHALQASGQPSLQSQWQPQLQQLRDMGIQDDELSLRALQATGGDIQAALELIFAGGAP</sequence>
<comment type="function">
    <text evidence="1">Interferon-stimulated protein that positively regulates RNA virus-triggered innate immune signaling. Mechanistically, promotes 'Lys-27'-linked polyubiquitination of MAVS through TRIM21 leading to enhanced the IFN signaling pathway.</text>
</comment>
<comment type="subunit">
    <text evidence="1">Binds ubiquitin. Interacts with MAVS; this interaction enhances TRIM21-dependent 'Lys-27'-linked polyubiquitination of MAVS.</text>
</comment>
<comment type="PTM">
    <text evidence="1">Deubiquitinated by OTUD4 which stabilizes UBL7 expression.</text>
</comment>
<evidence type="ECO:0000250" key="1">
    <source>
        <dbReference type="UniProtKB" id="Q96S82"/>
    </source>
</evidence>
<evidence type="ECO:0000255" key="2">
    <source>
        <dbReference type="PROSITE-ProRule" id="PRU00212"/>
    </source>
</evidence>
<evidence type="ECO:0000255" key="3">
    <source>
        <dbReference type="PROSITE-ProRule" id="PRU00214"/>
    </source>
</evidence>
<evidence type="ECO:0000256" key="4">
    <source>
        <dbReference type="SAM" id="MobiDB-lite"/>
    </source>
</evidence>
<keyword id="KW-0391">Immunity</keyword>
<keyword id="KW-0399">Innate immunity</keyword>
<keyword id="KW-0597">Phosphoprotein</keyword>
<keyword id="KW-1185">Reference proteome</keyword>
<keyword id="KW-0833">Ubl conjugation pathway</keyword>
<organism>
    <name type="scientific">Bos taurus</name>
    <name type="common">Bovine</name>
    <dbReference type="NCBI Taxonomy" id="9913"/>
    <lineage>
        <taxon>Eukaryota</taxon>
        <taxon>Metazoa</taxon>
        <taxon>Chordata</taxon>
        <taxon>Craniata</taxon>
        <taxon>Vertebrata</taxon>
        <taxon>Euteleostomi</taxon>
        <taxon>Mammalia</taxon>
        <taxon>Eutheria</taxon>
        <taxon>Laurasiatheria</taxon>
        <taxon>Artiodactyla</taxon>
        <taxon>Ruminantia</taxon>
        <taxon>Pecora</taxon>
        <taxon>Bovidae</taxon>
        <taxon>Bovinae</taxon>
        <taxon>Bos</taxon>
    </lineage>
</organism>
<name>UBL7_BOVIN</name>